<evidence type="ECO:0000255" key="1">
    <source>
        <dbReference type="HAMAP-Rule" id="MF_01382"/>
    </source>
</evidence>
<evidence type="ECO:0000256" key="2">
    <source>
        <dbReference type="SAM" id="MobiDB-lite"/>
    </source>
</evidence>
<dbReference type="EC" id="7.4.2.8" evidence="1"/>
<dbReference type="EMBL" id="AE016877">
    <property type="protein sequence ID" value="AAP12054.1"/>
    <property type="molecule type" value="Genomic_DNA"/>
</dbReference>
<dbReference type="RefSeq" id="NP_834853.1">
    <property type="nucleotide sequence ID" value="NC_004722.1"/>
</dbReference>
<dbReference type="RefSeq" id="WP_000579379.1">
    <property type="nucleotide sequence ID" value="NC_004722.1"/>
</dbReference>
<dbReference type="SMR" id="Q815G7"/>
<dbReference type="STRING" id="226900.BC_5189"/>
<dbReference type="KEGG" id="bce:BC5189"/>
<dbReference type="PATRIC" id="fig|226900.8.peg.5349"/>
<dbReference type="HOGENOM" id="CLU_005314_3_0_9"/>
<dbReference type="Proteomes" id="UP000001417">
    <property type="component" value="Chromosome"/>
</dbReference>
<dbReference type="GO" id="GO:0031522">
    <property type="term" value="C:cell envelope Sec protein transport complex"/>
    <property type="evidence" value="ECO:0000318"/>
    <property type="project" value="GO_Central"/>
</dbReference>
<dbReference type="GO" id="GO:0005737">
    <property type="term" value="C:cytoplasm"/>
    <property type="evidence" value="ECO:0007669"/>
    <property type="project" value="UniProtKB-SubCell"/>
</dbReference>
<dbReference type="GO" id="GO:0005886">
    <property type="term" value="C:plasma membrane"/>
    <property type="evidence" value="ECO:0000318"/>
    <property type="project" value="GO_Central"/>
</dbReference>
<dbReference type="GO" id="GO:0005524">
    <property type="term" value="F:ATP binding"/>
    <property type="evidence" value="ECO:0000318"/>
    <property type="project" value="GO_Central"/>
</dbReference>
<dbReference type="GO" id="GO:0046872">
    <property type="term" value="F:metal ion binding"/>
    <property type="evidence" value="ECO:0007669"/>
    <property type="project" value="UniProtKB-KW"/>
</dbReference>
<dbReference type="GO" id="GO:0008564">
    <property type="term" value="F:protein-exporting ATPase activity"/>
    <property type="evidence" value="ECO:0007669"/>
    <property type="project" value="UniProtKB-EC"/>
</dbReference>
<dbReference type="GO" id="GO:0065002">
    <property type="term" value="P:intracellular protein transmembrane transport"/>
    <property type="evidence" value="ECO:0007669"/>
    <property type="project" value="UniProtKB-UniRule"/>
</dbReference>
<dbReference type="GO" id="GO:0017038">
    <property type="term" value="P:protein import"/>
    <property type="evidence" value="ECO:0007669"/>
    <property type="project" value="InterPro"/>
</dbReference>
<dbReference type="GO" id="GO:0006605">
    <property type="term" value="P:protein targeting"/>
    <property type="evidence" value="ECO:0007669"/>
    <property type="project" value="UniProtKB-UniRule"/>
</dbReference>
<dbReference type="GO" id="GO:0043952">
    <property type="term" value="P:protein transport by the Sec complex"/>
    <property type="evidence" value="ECO:0000318"/>
    <property type="project" value="GO_Central"/>
</dbReference>
<dbReference type="CDD" id="cd17928">
    <property type="entry name" value="DEXDc_SecA"/>
    <property type="match status" value="1"/>
</dbReference>
<dbReference type="CDD" id="cd18803">
    <property type="entry name" value="SF2_C_secA"/>
    <property type="match status" value="1"/>
</dbReference>
<dbReference type="FunFam" id="1.10.3060.10:FF:000002">
    <property type="entry name" value="Preprotein translocase subunit SecA"/>
    <property type="match status" value="1"/>
</dbReference>
<dbReference type="FunFam" id="3.40.50.300:FF:000081">
    <property type="entry name" value="Preprotein translocase subunit SecA"/>
    <property type="match status" value="1"/>
</dbReference>
<dbReference type="FunFam" id="3.40.50.300:FF:000429">
    <property type="entry name" value="Preprotein translocase subunit SecA"/>
    <property type="match status" value="1"/>
</dbReference>
<dbReference type="FunFam" id="3.90.1440.10:FF:000001">
    <property type="entry name" value="Preprotein translocase subunit SecA"/>
    <property type="match status" value="1"/>
</dbReference>
<dbReference type="Gene3D" id="1.10.3060.10">
    <property type="entry name" value="Helical scaffold and wing domains of SecA"/>
    <property type="match status" value="1"/>
</dbReference>
<dbReference type="Gene3D" id="3.40.50.300">
    <property type="entry name" value="P-loop containing nucleotide triphosphate hydrolases"/>
    <property type="match status" value="3"/>
</dbReference>
<dbReference type="Gene3D" id="3.90.1440.10">
    <property type="entry name" value="SecA, preprotein cross-linking domain"/>
    <property type="match status" value="1"/>
</dbReference>
<dbReference type="HAMAP" id="MF_01382">
    <property type="entry name" value="SecA"/>
    <property type="match status" value="1"/>
</dbReference>
<dbReference type="InterPro" id="IPR014001">
    <property type="entry name" value="Helicase_ATP-bd"/>
</dbReference>
<dbReference type="InterPro" id="IPR001650">
    <property type="entry name" value="Helicase_C-like"/>
</dbReference>
<dbReference type="InterPro" id="IPR027417">
    <property type="entry name" value="P-loop_NTPase"/>
</dbReference>
<dbReference type="InterPro" id="IPR004027">
    <property type="entry name" value="SEC_C_motif"/>
</dbReference>
<dbReference type="InterPro" id="IPR000185">
    <property type="entry name" value="SecA"/>
</dbReference>
<dbReference type="InterPro" id="IPR020937">
    <property type="entry name" value="SecA_CS"/>
</dbReference>
<dbReference type="InterPro" id="IPR011115">
    <property type="entry name" value="SecA_DEAD"/>
</dbReference>
<dbReference type="InterPro" id="IPR014018">
    <property type="entry name" value="SecA_motor_DEAD"/>
</dbReference>
<dbReference type="InterPro" id="IPR011130">
    <property type="entry name" value="SecA_preprotein_X-link_dom"/>
</dbReference>
<dbReference type="InterPro" id="IPR044722">
    <property type="entry name" value="SecA_SF2_C"/>
</dbReference>
<dbReference type="InterPro" id="IPR011116">
    <property type="entry name" value="SecA_Wing/Scaffold"/>
</dbReference>
<dbReference type="InterPro" id="IPR036266">
    <property type="entry name" value="SecA_Wing/Scaffold_sf"/>
</dbReference>
<dbReference type="InterPro" id="IPR036670">
    <property type="entry name" value="SecA_X-link_sf"/>
</dbReference>
<dbReference type="NCBIfam" id="NF006630">
    <property type="entry name" value="PRK09200.1"/>
    <property type="match status" value="1"/>
</dbReference>
<dbReference type="NCBIfam" id="NF009538">
    <property type="entry name" value="PRK12904.1"/>
    <property type="match status" value="1"/>
</dbReference>
<dbReference type="NCBIfam" id="TIGR00963">
    <property type="entry name" value="secA"/>
    <property type="match status" value="1"/>
</dbReference>
<dbReference type="PANTHER" id="PTHR30612:SF0">
    <property type="entry name" value="CHLOROPLAST PROTEIN-TRANSPORTING ATPASE"/>
    <property type="match status" value="1"/>
</dbReference>
<dbReference type="PANTHER" id="PTHR30612">
    <property type="entry name" value="SECA INNER MEMBRANE COMPONENT OF SEC PROTEIN SECRETION SYSTEM"/>
    <property type="match status" value="1"/>
</dbReference>
<dbReference type="Pfam" id="PF21090">
    <property type="entry name" value="P-loop_SecA"/>
    <property type="match status" value="2"/>
</dbReference>
<dbReference type="Pfam" id="PF02810">
    <property type="entry name" value="SEC-C"/>
    <property type="match status" value="1"/>
</dbReference>
<dbReference type="Pfam" id="PF07517">
    <property type="entry name" value="SecA_DEAD"/>
    <property type="match status" value="1"/>
</dbReference>
<dbReference type="Pfam" id="PF01043">
    <property type="entry name" value="SecA_PP_bind"/>
    <property type="match status" value="1"/>
</dbReference>
<dbReference type="Pfam" id="PF07516">
    <property type="entry name" value="SecA_SW"/>
    <property type="match status" value="1"/>
</dbReference>
<dbReference type="PRINTS" id="PR00906">
    <property type="entry name" value="SECA"/>
</dbReference>
<dbReference type="SMART" id="SM00957">
    <property type="entry name" value="SecA_DEAD"/>
    <property type="match status" value="1"/>
</dbReference>
<dbReference type="SMART" id="SM00958">
    <property type="entry name" value="SecA_PP_bind"/>
    <property type="match status" value="1"/>
</dbReference>
<dbReference type="SUPFAM" id="SSF81886">
    <property type="entry name" value="Helical scaffold and wing domains of SecA"/>
    <property type="match status" value="1"/>
</dbReference>
<dbReference type="SUPFAM" id="SSF52540">
    <property type="entry name" value="P-loop containing nucleoside triphosphate hydrolases"/>
    <property type="match status" value="2"/>
</dbReference>
<dbReference type="SUPFAM" id="SSF81767">
    <property type="entry name" value="Pre-protein crosslinking domain of SecA"/>
    <property type="match status" value="1"/>
</dbReference>
<dbReference type="PROSITE" id="PS01312">
    <property type="entry name" value="SECA"/>
    <property type="match status" value="1"/>
</dbReference>
<dbReference type="PROSITE" id="PS51196">
    <property type="entry name" value="SECA_MOTOR_DEAD"/>
    <property type="match status" value="1"/>
</dbReference>
<keyword id="KW-0067">ATP-binding</keyword>
<keyword id="KW-1003">Cell membrane</keyword>
<keyword id="KW-0963">Cytoplasm</keyword>
<keyword id="KW-0472">Membrane</keyword>
<keyword id="KW-0479">Metal-binding</keyword>
<keyword id="KW-0547">Nucleotide-binding</keyword>
<keyword id="KW-0653">Protein transport</keyword>
<keyword id="KW-1185">Reference proteome</keyword>
<keyword id="KW-1278">Translocase</keyword>
<keyword id="KW-0811">Translocation</keyword>
<keyword id="KW-0813">Transport</keyword>
<keyword id="KW-0862">Zinc</keyword>
<protein>
    <recommendedName>
        <fullName evidence="1">Protein translocase subunit SecA</fullName>
        <ecNumber evidence="1">7.4.2.8</ecNumber>
    </recommendedName>
</protein>
<feature type="chain" id="PRO_0000318313" description="Protein translocase subunit SecA">
    <location>
        <begin position="1"/>
        <end position="835"/>
    </location>
</feature>
<feature type="region of interest" description="Disordered" evidence="2">
    <location>
        <begin position="788"/>
        <end position="807"/>
    </location>
</feature>
<feature type="binding site" evidence="1">
    <location>
        <position position="85"/>
    </location>
    <ligand>
        <name>ATP</name>
        <dbReference type="ChEBI" id="CHEBI:30616"/>
    </ligand>
</feature>
<feature type="binding site" evidence="1">
    <location>
        <begin position="103"/>
        <end position="107"/>
    </location>
    <ligand>
        <name>ATP</name>
        <dbReference type="ChEBI" id="CHEBI:30616"/>
    </ligand>
</feature>
<feature type="binding site" evidence="1">
    <location>
        <position position="492"/>
    </location>
    <ligand>
        <name>ATP</name>
        <dbReference type="ChEBI" id="CHEBI:30616"/>
    </ligand>
</feature>
<feature type="binding site" evidence="1">
    <location>
        <position position="819"/>
    </location>
    <ligand>
        <name>Zn(2+)</name>
        <dbReference type="ChEBI" id="CHEBI:29105"/>
    </ligand>
</feature>
<feature type="binding site" evidence="1">
    <location>
        <position position="821"/>
    </location>
    <ligand>
        <name>Zn(2+)</name>
        <dbReference type="ChEBI" id="CHEBI:29105"/>
    </ligand>
</feature>
<feature type="binding site" evidence="1">
    <location>
        <position position="830"/>
    </location>
    <ligand>
        <name>Zn(2+)</name>
        <dbReference type="ChEBI" id="CHEBI:29105"/>
    </ligand>
</feature>
<feature type="binding site" evidence="1">
    <location>
        <position position="831"/>
    </location>
    <ligand>
        <name>Zn(2+)</name>
        <dbReference type="ChEBI" id="CHEBI:29105"/>
    </ligand>
</feature>
<name>SECA_BACCR</name>
<comment type="function">
    <text evidence="1">Part of the Sec protein translocase complex. Interacts with the SecYEG preprotein conducting channel. Has a central role in coupling the hydrolysis of ATP to the transfer of proteins into and across the cell membrane, serving as an ATP-driven molecular motor driving the stepwise translocation of polypeptide chains across the membrane.</text>
</comment>
<comment type="catalytic activity">
    <reaction evidence="1">
        <text>ATP + H2O + cellular proteinSide 1 = ADP + phosphate + cellular proteinSide 2.</text>
        <dbReference type="EC" id="7.4.2.8"/>
    </reaction>
</comment>
<comment type="cofactor">
    <cofactor evidence="1">
        <name>Zn(2+)</name>
        <dbReference type="ChEBI" id="CHEBI:29105"/>
    </cofactor>
    <text evidence="1">May bind 1 zinc ion per subunit.</text>
</comment>
<comment type="subunit">
    <text evidence="1">Monomer and homodimer. Part of the essential Sec protein translocation apparatus which comprises SecA, SecYEG and auxiliary proteins SecDF. Other proteins may also be involved.</text>
</comment>
<comment type="subcellular location">
    <subcellularLocation>
        <location evidence="1">Cell membrane</location>
        <topology evidence="1">Peripheral membrane protein</topology>
        <orientation evidence="1">Cytoplasmic side</orientation>
    </subcellularLocation>
    <subcellularLocation>
        <location evidence="1">Cytoplasm</location>
    </subcellularLocation>
    <text evidence="1">Distribution is 50-50.</text>
</comment>
<comment type="similarity">
    <text evidence="1">Belongs to the SecA family.</text>
</comment>
<gene>
    <name evidence="1" type="primary">secA</name>
    <name type="ordered locus">BC_5189</name>
</gene>
<proteinExistence type="inferred from homology"/>
<organism>
    <name type="scientific">Bacillus cereus (strain ATCC 14579 / DSM 31 / CCUG 7414 / JCM 2152 / NBRC 15305 / NCIMB 9373 / NCTC 2599 / NRRL B-3711)</name>
    <dbReference type="NCBI Taxonomy" id="226900"/>
    <lineage>
        <taxon>Bacteria</taxon>
        <taxon>Bacillati</taxon>
        <taxon>Bacillota</taxon>
        <taxon>Bacilli</taxon>
        <taxon>Bacillales</taxon>
        <taxon>Bacillaceae</taxon>
        <taxon>Bacillus</taxon>
        <taxon>Bacillus cereus group</taxon>
    </lineage>
</organism>
<accession>Q815G7</accession>
<sequence>MIGILKKVFDVNQRQIKRMQKTVEQIDALESSIKPLTDEQLKGKTLEFKERLTKGETVDDLLPEAFAVVREAATRVLGMRPYGVQLMGGIALHEGNISEMKTGEGKTLTSTLPVYLNALTGKGVHVVTVNEYLAQRDASEMGQLHEFLGLTVGINLNSMSREEKQEAYAADITYSTNNELGFDYLRDNMGLYKEECVQRPLHFAIIDEVDSILVDEARTPLIISGQAQKSTELYMFANAFVRTLENEKDYSFDVKTKNVMLTEDGITKAEKAFHIENLFDLKHVALLHHINQGLRAHVVMHRDTDYVVQEGEIVIVDQFTGRLMKGRRYSEGLHQAIEAKEGVEIQNESMTLATITFQNYFRMYEKLSGMTGTAKTEEEEFRNIYNMNVIVIPTNKPIIRDDRADLIFKSMEGKFNAVVEDIVNRHKKGQPVLVGTVAIETSELISKMLTRKGVRHNILNAKNHAREADIIAEAGIKGAVTIATNMAGRGTDIKLGDDVKNVGLAVIGTERHESRRIDNQLRGRAGRQGDPGVTQFYLSMEDELMRRFGSDNMKAMMDRLGMDDSQPIESKMVSRAVESAQKRVEGNNYDARKQLLQYDDVLRQQREVIYKQRQEVMESDNLRGIIEGMMKSTVERAVALHTQEEIEEDWNIKGLVDYLNTNLLQDGDVKEEELRRLAPEEMSEPIIEKLIERYNEKEKLMPEEQMREFEKVVVFRVVDTKWTEHIDAMDHLREGIHLRAYGQIDPLREYQMEGFAMFESMVASIEEEISRYIMKAEIEQNLERQEVVQGEAVHPSSDGEEAKKKPVVKGDQVGRNDLCKCGSGKKYKNCCGIVQ</sequence>
<reference key="1">
    <citation type="journal article" date="2003" name="Nature">
        <title>Genome sequence of Bacillus cereus and comparative analysis with Bacillus anthracis.</title>
        <authorList>
            <person name="Ivanova N."/>
            <person name="Sorokin A."/>
            <person name="Anderson I."/>
            <person name="Galleron N."/>
            <person name="Candelon B."/>
            <person name="Kapatral V."/>
            <person name="Bhattacharyya A."/>
            <person name="Reznik G."/>
            <person name="Mikhailova N."/>
            <person name="Lapidus A."/>
            <person name="Chu L."/>
            <person name="Mazur M."/>
            <person name="Goltsman E."/>
            <person name="Larsen N."/>
            <person name="D'Souza M."/>
            <person name="Walunas T."/>
            <person name="Grechkin Y."/>
            <person name="Pusch G."/>
            <person name="Haselkorn R."/>
            <person name="Fonstein M."/>
            <person name="Ehrlich S.D."/>
            <person name="Overbeek R."/>
            <person name="Kyrpides N.C."/>
        </authorList>
    </citation>
    <scope>NUCLEOTIDE SEQUENCE [LARGE SCALE GENOMIC DNA]</scope>
    <source>
        <strain>ATCC 14579 / DSM 31 / CCUG 7414 / JCM 2152 / NBRC 15305 / NCIMB 9373 / NCTC 2599 / NRRL B-3711</strain>
    </source>
</reference>